<gene>
    <name evidence="1" type="primary">cas1</name>
    <name type="ordered locus">Hbut_0652</name>
</gene>
<dbReference type="EC" id="3.1.-.-" evidence="1"/>
<dbReference type="EMBL" id="CP000493">
    <property type="protein sequence ID" value="ABM80509.1"/>
    <property type="molecule type" value="Genomic_DNA"/>
</dbReference>
<dbReference type="RefSeq" id="WP_011821827.1">
    <property type="nucleotide sequence ID" value="NC_008818.1"/>
</dbReference>
<dbReference type="SMR" id="A2BKJ8"/>
<dbReference type="STRING" id="415426.Hbut_0652"/>
<dbReference type="EnsemblBacteria" id="ABM80509">
    <property type="protein sequence ID" value="ABM80509"/>
    <property type="gene ID" value="Hbut_0652"/>
</dbReference>
<dbReference type="GeneID" id="4782113"/>
<dbReference type="KEGG" id="hbu:Hbut_0652"/>
<dbReference type="eggNOG" id="arCOG01452">
    <property type="taxonomic scope" value="Archaea"/>
</dbReference>
<dbReference type="HOGENOM" id="CLU_052779_0_0_2"/>
<dbReference type="OrthoDB" id="2216at2157"/>
<dbReference type="Proteomes" id="UP000002593">
    <property type="component" value="Chromosome"/>
</dbReference>
<dbReference type="GO" id="GO:0003677">
    <property type="term" value="F:DNA binding"/>
    <property type="evidence" value="ECO:0007669"/>
    <property type="project" value="UniProtKB-KW"/>
</dbReference>
<dbReference type="GO" id="GO:0004519">
    <property type="term" value="F:endonuclease activity"/>
    <property type="evidence" value="ECO:0007669"/>
    <property type="project" value="UniProtKB-UniRule"/>
</dbReference>
<dbReference type="GO" id="GO:0046872">
    <property type="term" value="F:metal ion binding"/>
    <property type="evidence" value="ECO:0007669"/>
    <property type="project" value="UniProtKB-UniRule"/>
</dbReference>
<dbReference type="GO" id="GO:0051607">
    <property type="term" value="P:defense response to virus"/>
    <property type="evidence" value="ECO:0007669"/>
    <property type="project" value="UniProtKB-UniRule"/>
</dbReference>
<dbReference type="GO" id="GO:0043571">
    <property type="term" value="P:maintenance of CRISPR repeat elements"/>
    <property type="evidence" value="ECO:0007669"/>
    <property type="project" value="UniProtKB-UniRule"/>
</dbReference>
<dbReference type="CDD" id="cd09634">
    <property type="entry name" value="Cas1_I-II-III"/>
    <property type="match status" value="1"/>
</dbReference>
<dbReference type="Gene3D" id="1.20.120.920">
    <property type="entry name" value="CRISPR-associated endonuclease Cas1, C-terminal domain"/>
    <property type="match status" value="1"/>
</dbReference>
<dbReference type="Gene3D" id="3.100.10.20">
    <property type="entry name" value="CRISPR-associated endonuclease Cas1, N-terminal domain"/>
    <property type="match status" value="1"/>
</dbReference>
<dbReference type="HAMAP" id="MF_01470">
    <property type="entry name" value="Cas1"/>
    <property type="match status" value="1"/>
</dbReference>
<dbReference type="InterPro" id="IPR050646">
    <property type="entry name" value="Cas1"/>
</dbReference>
<dbReference type="InterPro" id="IPR002729">
    <property type="entry name" value="CRISPR-assoc_Cas1"/>
</dbReference>
<dbReference type="InterPro" id="IPR042206">
    <property type="entry name" value="CRISPR-assoc_Cas1_C"/>
</dbReference>
<dbReference type="InterPro" id="IPR042211">
    <property type="entry name" value="CRISPR-assoc_Cas1_N"/>
</dbReference>
<dbReference type="NCBIfam" id="TIGR00287">
    <property type="entry name" value="cas1"/>
    <property type="match status" value="1"/>
</dbReference>
<dbReference type="PANTHER" id="PTHR34353">
    <property type="entry name" value="CRISPR-ASSOCIATED ENDONUCLEASE CAS1 1"/>
    <property type="match status" value="1"/>
</dbReference>
<dbReference type="PANTHER" id="PTHR34353:SF2">
    <property type="entry name" value="CRISPR-ASSOCIATED ENDONUCLEASE CAS1 1"/>
    <property type="match status" value="1"/>
</dbReference>
<dbReference type="Pfam" id="PF01867">
    <property type="entry name" value="Cas_Cas1"/>
    <property type="match status" value="1"/>
</dbReference>
<sequence>MPEVLLVATPGTRIYVRRGVVYAEAPSGEKAVVTADTELVVLATGSVSVSGRALRRLAELGVRLVVLGQRGQVVAEHRPVDRVNRTIEARMEQYRVKATGEALYYAAEMVYAKIVNQAKLLRYLAKSRREPWLRDAGYRVEGHADRLRQIIENEEPTTPEVIRSIEAQAARDYWDAIAQIAPTPFPGRQPRGEDHLNMALSYGYAILYSIAHDALTVAGLDPYAGFLHADRSGRPSLTYDYADTYKPIAVDKPLLTAPRKTDCLDTYMGALTYNARRCIATLVLENIYKTPYPDSRGRKKTLRDHIYTYAWNLAAAIRQHKPYKPFIVGRL</sequence>
<evidence type="ECO:0000255" key="1">
    <source>
        <dbReference type="HAMAP-Rule" id="MF_01470"/>
    </source>
</evidence>
<organism>
    <name type="scientific">Hyperthermus butylicus (strain DSM 5456 / JCM 9403 / PLM1-5)</name>
    <dbReference type="NCBI Taxonomy" id="415426"/>
    <lineage>
        <taxon>Archaea</taxon>
        <taxon>Thermoproteota</taxon>
        <taxon>Thermoprotei</taxon>
        <taxon>Desulfurococcales</taxon>
        <taxon>Pyrodictiaceae</taxon>
        <taxon>Hyperthermus</taxon>
    </lineage>
</organism>
<feature type="chain" id="PRO_0000417095" description="CRISPR-associated endonuclease Cas1">
    <location>
        <begin position="1"/>
        <end position="331"/>
    </location>
</feature>
<feature type="binding site" evidence="1">
    <location>
        <position position="166"/>
    </location>
    <ligand>
        <name>Mn(2+)</name>
        <dbReference type="ChEBI" id="CHEBI:29035"/>
    </ligand>
</feature>
<feature type="binding site" evidence="1">
    <location>
        <position position="228"/>
    </location>
    <ligand>
        <name>Mn(2+)</name>
        <dbReference type="ChEBI" id="CHEBI:29035"/>
    </ligand>
</feature>
<feature type="binding site" evidence="1">
    <location>
        <position position="243"/>
    </location>
    <ligand>
        <name>Mn(2+)</name>
        <dbReference type="ChEBI" id="CHEBI:29035"/>
    </ligand>
</feature>
<reference key="1">
    <citation type="journal article" date="2007" name="Archaea">
        <title>The genome of Hyperthermus butylicus: a sulfur-reducing, peptide fermenting, neutrophilic Crenarchaeote growing up to 108 degrees C.</title>
        <authorList>
            <person name="Bruegger K."/>
            <person name="Chen L."/>
            <person name="Stark M."/>
            <person name="Zibat A."/>
            <person name="Redder P."/>
            <person name="Ruepp A."/>
            <person name="Awayez M."/>
            <person name="She Q."/>
            <person name="Garrett R.A."/>
            <person name="Klenk H.-P."/>
        </authorList>
    </citation>
    <scope>NUCLEOTIDE SEQUENCE [LARGE SCALE GENOMIC DNA]</scope>
    <source>
        <strain>DSM 5456 / JCM 9403 / PLM1-5</strain>
    </source>
</reference>
<name>CAS1_HYPBU</name>
<comment type="function">
    <text evidence="1">CRISPR (clustered regularly interspaced short palindromic repeat), is an adaptive immune system that provides protection against mobile genetic elements (viruses, transposable elements and conjugative plasmids). CRISPR clusters contain spacers, sequences complementary to antecedent mobile elements, and target invading nucleic acids. CRISPR clusters are transcribed and processed into CRISPR RNA (crRNA). Acts as a dsDNA endonuclease. Involved in the integration of spacer DNA into the CRISPR cassette.</text>
</comment>
<comment type="cofactor">
    <cofactor evidence="1">
        <name>Mg(2+)</name>
        <dbReference type="ChEBI" id="CHEBI:18420"/>
    </cofactor>
    <cofactor evidence="1">
        <name>Mn(2+)</name>
        <dbReference type="ChEBI" id="CHEBI:29035"/>
    </cofactor>
</comment>
<comment type="subunit">
    <text evidence="1">Homodimer, forms a heterotetramer with a Cas2 homodimer.</text>
</comment>
<comment type="similarity">
    <text evidence="1">Belongs to the CRISPR-associated endonuclease Cas1 family.</text>
</comment>
<proteinExistence type="inferred from homology"/>
<keyword id="KW-0051">Antiviral defense</keyword>
<keyword id="KW-0238">DNA-binding</keyword>
<keyword id="KW-0255">Endonuclease</keyword>
<keyword id="KW-0378">Hydrolase</keyword>
<keyword id="KW-0460">Magnesium</keyword>
<keyword id="KW-0464">Manganese</keyword>
<keyword id="KW-0479">Metal-binding</keyword>
<keyword id="KW-0540">Nuclease</keyword>
<keyword id="KW-1185">Reference proteome</keyword>
<accession>A2BKJ8</accession>
<protein>
    <recommendedName>
        <fullName evidence="1">CRISPR-associated endonuclease Cas1</fullName>
        <ecNumber evidence="1">3.1.-.-</ecNumber>
    </recommendedName>
</protein>